<feature type="chain" id="PRO_1000065692" description="UDP-4-amino-4-deoxy-L-arabinose--oxoglutarate aminotransferase">
    <location>
        <begin position="1"/>
        <end position="384"/>
    </location>
</feature>
<feature type="modified residue" description="N6-(pyridoxal phosphate)lysine" evidence="1">
    <location>
        <position position="182"/>
    </location>
</feature>
<gene>
    <name evidence="1" type="primary">arnB</name>
    <name type="ordered locus">YpsIP31758_1723</name>
</gene>
<proteinExistence type="inferred from homology"/>
<reference key="1">
    <citation type="journal article" date="2007" name="PLoS Genet.">
        <title>The complete genome sequence of Yersinia pseudotuberculosis IP31758, the causative agent of Far East scarlet-like fever.</title>
        <authorList>
            <person name="Eppinger M."/>
            <person name="Rosovitz M.J."/>
            <person name="Fricke W.F."/>
            <person name="Rasko D.A."/>
            <person name="Kokorina G."/>
            <person name="Fayolle C."/>
            <person name="Lindler L.E."/>
            <person name="Carniel E."/>
            <person name="Ravel J."/>
        </authorList>
    </citation>
    <scope>NUCLEOTIDE SEQUENCE [LARGE SCALE GENOMIC DNA]</scope>
    <source>
        <strain>IP 31758</strain>
    </source>
</reference>
<dbReference type="EC" id="2.6.1.87" evidence="1"/>
<dbReference type="EMBL" id="CP000720">
    <property type="protein sequence ID" value="ABS47915.1"/>
    <property type="molecule type" value="Genomic_DNA"/>
</dbReference>
<dbReference type="RefSeq" id="WP_002211825.1">
    <property type="nucleotide sequence ID" value="NC_009708.1"/>
</dbReference>
<dbReference type="SMR" id="A7FHH2"/>
<dbReference type="GeneID" id="57976255"/>
<dbReference type="KEGG" id="ypi:YpsIP31758_1723"/>
<dbReference type="HOGENOM" id="CLU_033332_0_3_6"/>
<dbReference type="UniPathway" id="UPA00030"/>
<dbReference type="UniPathway" id="UPA00032">
    <property type="reaction ID" value="UER00493"/>
</dbReference>
<dbReference type="Proteomes" id="UP000002412">
    <property type="component" value="Chromosome"/>
</dbReference>
<dbReference type="GO" id="GO:0016020">
    <property type="term" value="C:membrane"/>
    <property type="evidence" value="ECO:0007669"/>
    <property type="project" value="GOC"/>
</dbReference>
<dbReference type="GO" id="GO:0030170">
    <property type="term" value="F:pyridoxal phosphate binding"/>
    <property type="evidence" value="ECO:0007669"/>
    <property type="project" value="TreeGrafter"/>
</dbReference>
<dbReference type="GO" id="GO:0099620">
    <property type="term" value="F:UDP-4-amino-4-deoxy-L-arabinose aminotransferase"/>
    <property type="evidence" value="ECO:0007669"/>
    <property type="project" value="UniProtKB-EC"/>
</dbReference>
<dbReference type="GO" id="GO:0009245">
    <property type="term" value="P:lipid A biosynthetic process"/>
    <property type="evidence" value="ECO:0007669"/>
    <property type="project" value="UniProtKB-KW"/>
</dbReference>
<dbReference type="GO" id="GO:0009103">
    <property type="term" value="P:lipopolysaccharide biosynthetic process"/>
    <property type="evidence" value="ECO:0007669"/>
    <property type="project" value="UniProtKB-UniRule"/>
</dbReference>
<dbReference type="GO" id="GO:0046677">
    <property type="term" value="P:response to antibiotic"/>
    <property type="evidence" value="ECO:0007669"/>
    <property type="project" value="UniProtKB-KW"/>
</dbReference>
<dbReference type="CDD" id="cd00616">
    <property type="entry name" value="AHBA_syn"/>
    <property type="match status" value="1"/>
</dbReference>
<dbReference type="FunFam" id="3.40.640.10:FF:000040">
    <property type="entry name" value="UDP-4-amino-4-deoxy-L-arabinose--oxoglutarate aminotransferase"/>
    <property type="match status" value="1"/>
</dbReference>
<dbReference type="FunFam" id="3.90.1150.10:FF:000030">
    <property type="entry name" value="UDP-4-amino-4-deoxy-L-arabinose--oxoglutarate aminotransferase"/>
    <property type="match status" value="1"/>
</dbReference>
<dbReference type="Gene3D" id="3.90.1150.10">
    <property type="entry name" value="Aspartate Aminotransferase, domain 1"/>
    <property type="match status" value="1"/>
</dbReference>
<dbReference type="Gene3D" id="3.40.640.10">
    <property type="entry name" value="Type I PLP-dependent aspartate aminotransferase-like (Major domain)"/>
    <property type="match status" value="1"/>
</dbReference>
<dbReference type="HAMAP" id="MF_01167">
    <property type="entry name" value="ArnB_transfer"/>
    <property type="match status" value="1"/>
</dbReference>
<dbReference type="InterPro" id="IPR022850">
    <property type="entry name" value="ArnB_NH2Trfase"/>
</dbReference>
<dbReference type="InterPro" id="IPR000653">
    <property type="entry name" value="DegT/StrS_aminotransferase"/>
</dbReference>
<dbReference type="InterPro" id="IPR015424">
    <property type="entry name" value="PyrdxlP-dep_Trfase"/>
</dbReference>
<dbReference type="InterPro" id="IPR015421">
    <property type="entry name" value="PyrdxlP-dep_Trfase_major"/>
</dbReference>
<dbReference type="InterPro" id="IPR015422">
    <property type="entry name" value="PyrdxlP-dep_Trfase_small"/>
</dbReference>
<dbReference type="NCBIfam" id="NF008658">
    <property type="entry name" value="PRK11658.1"/>
    <property type="match status" value="1"/>
</dbReference>
<dbReference type="PANTHER" id="PTHR30244">
    <property type="entry name" value="TRANSAMINASE"/>
    <property type="match status" value="1"/>
</dbReference>
<dbReference type="PANTHER" id="PTHR30244:SF41">
    <property type="entry name" value="UDP-4-AMINO-4-DEOXY-L-ARABINOSE--OXOGLUTARATE AMINOTRANSFERASE"/>
    <property type="match status" value="1"/>
</dbReference>
<dbReference type="Pfam" id="PF01041">
    <property type="entry name" value="DegT_DnrJ_EryC1"/>
    <property type="match status" value="1"/>
</dbReference>
<dbReference type="PIRSF" id="PIRSF000390">
    <property type="entry name" value="PLP_StrS"/>
    <property type="match status" value="1"/>
</dbReference>
<dbReference type="SUPFAM" id="SSF53383">
    <property type="entry name" value="PLP-dependent transferases"/>
    <property type="match status" value="1"/>
</dbReference>
<accession>A7FHH2</accession>
<comment type="function">
    <text evidence="1">Catalyzes the conversion of UDP-4-keto-arabinose (UDP-Ara4O) to UDP-4-amino-4-deoxy-L-arabinose (UDP-L-Ara4N). The modified arabinose is attached to lipid A and is required for resistance to polymyxin and cationic antimicrobial peptides.</text>
</comment>
<comment type="catalytic activity">
    <reaction evidence="1">
        <text>UDP-4-amino-4-deoxy-beta-L-arabinose + 2-oxoglutarate = UDP-beta-L-threo-pentopyranos-4-ulose + L-glutamate</text>
        <dbReference type="Rhea" id="RHEA:24710"/>
        <dbReference type="ChEBI" id="CHEBI:16810"/>
        <dbReference type="ChEBI" id="CHEBI:29985"/>
        <dbReference type="ChEBI" id="CHEBI:58708"/>
        <dbReference type="ChEBI" id="CHEBI:58710"/>
        <dbReference type="EC" id="2.6.1.87"/>
    </reaction>
</comment>
<comment type="cofactor">
    <cofactor evidence="1">
        <name>pyridoxal 5'-phosphate</name>
        <dbReference type="ChEBI" id="CHEBI:597326"/>
    </cofactor>
</comment>
<comment type="pathway">
    <text evidence="1">Nucleotide-sugar biosynthesis; UDP-4-deoxy-4-formamido-beta-L-arabinose biosynthesis; UDP-4-deoxy-4-formamido-beta-L-arabinose from UDP-alpha-D-glucuronate: step 2/3.</text>
</comment>
<comment type="pathway">
    <text evidence="1">Bacterial outer membrane biogenesis; lipopolysaccharide biosynthesis.</text>
</comment>
<comment type="subunit">
    <text evidence="1">Homodimer.</text>
</comment>
<comment type="similarity">
    <text evidence="1">Belongs to the DegT/DnrJ/EryC1 family. ArnB subfamily.</text>
</comment>
<protein>
    <recommendedName>
        <fullName evidence="1">UDP-4-amino-4-deoxy-L-arabinose--oxoglutarate aminotransferase</fullName>
        <ecNumber evidence="1">2.6.1.87</ecNumber>
    </recommendedName>
    <alternativeName>
        <fullName evidence="1">UDP-(beta-L-threo-pentapyranosyl-4''-ulose diphosphate) aminotransferase</fullName>
        <shortName evidence="1">UDP-Ara4O aminotransferase</shortName>
    </alternativeName>
    <alternativeName>
        <fullName evidence="1">UDP-4-amino-4-deoxy-L-arabinose aminotransferase</fullName>
    </alternativeName>
</protein>
<evidence type="ECO:0000255" key="1">
    <source>
        <dbReference type="HAMAP-Rule" id="MF_01167"/>
    </source>
</evidence>
<name>ARNB_YERP3</name>
<keyword id="KW-0032">Aminotransferase</keyword>
<keyword id="KW-0046">Antibiotic resistance</keyword>
<keyword id="KW-0441">Lipid A biosynthesis</keyword>
<keyword id="KW-0444">Lipid biosynthesis</keyword>
<keyword id="KW-0443">Lipid metabolism</keyword>
<keyword id="KW-0448">Lipopolysaccharide biosynthesis</keyword>
<keyword id="KW-0663">Pyridoxal phosphate</keyword>
<keyword id="KW-0808">Transferase</keyword>
<sequence length="384" mass="42246">MQSFLPFSRPAIGSEEINAVANVLGSGWITTGPQNHQLETDFCQIFGCKHAIAVCSATAGMHITLLALGIGPGDEVITPSQTWVSTINMIVLLGAEPVMVDVDRDTLMVNAAAIEAAITPNTKAIIPVHYAGAPCDLDALRQISQRHGIPLIEDAAHAVGTRYRDQWIGEQGTAIFSFHAIKNITCAEGGLVATDDDELAARVRRLKFHGLGVDAFDRQIQGRSPQAEVVEPGYKYNLSDIHAAIAVVQLRRLPEINARRQALVASYHKALAHLPLQPLALPHYSHQHAWHLFMVRVDEERCGISRDQLMACLKDMGIGSGLHFRAVHSQKYYRERYPHLCLPNTEWNSARLCTLPLFPDMLDSDIERVANALTTIIGSHRVTK</sequence>
<organism>
    <name type="scientific">Yersinia pseudotuberculosis serotype O:1b (strain IP 31758)</name>
    <dbReference type="NCBI Taxonomy" id="349747"/>
    <lineage>
        <taxon>Bacteria</taxon>
        <taxon>Pseudomonadati</taxon>
        <taxon>Pseudomonadota</taxon>
        <taxon>Gammaproteobacteria</taxon>
        <taxon>Enterobacterales</taxon>
        <taxon>Yersiniaceae</taxon>
        <taxon>Yersinia</taxon>
    </lineage>
</organism>